<keyword id="KW-0168">Coated pit</keyword>
<keyword id="KW-0968">Cytoplasmic vesicle</keyword>
<keyword id="KW-0254">Endocytosis</keyword>
<keyword id="KW-0333">Golgi apparatus</keyword>
<keyword id="KW-0472">Membrane</keyword>
<keyword id="KW-1185">Reference proteome</keyword>
<name>CAP17_ARATH</name>
<organism>
    <name type="scientific">Arabidopsis thaliana</name>
    <name type="common">Mouse-ear cress</name>
    <dbReference type="NCBI Taxonomy" id="3702"/>
    <lineage>
        <taxon>Eukaryota</taxon>
        <taxon>Viridiplantae</taxon>
        <taxon>Streptophyta</taxon>
        <taxon>Embryophyta</taxon>
        <taxon>Tracheophyta</taxon>
        <taxon>Spermatophyta</taxon>
        <taxon>Magnoliopsida</taxon>
        <taxon>eudicotyledons</taxon>
        <taxon>Gunneridae</taxon>
        <taxon>Pentapetalae</taxon>
        <taxon>rosids</taxon>
        <taxon>malvids</taxon>
        <taxon>Brassicales</taxon>
        <taxon>Brassicaceae</taxon>
        <taxon>Camelineae</taxon>
        <taxon>Arabidopsis</taxon>
    </lineage>
</organism>
<dbReference type="EMBL" id="AL353995">
    <property type="protein sequence ID" value="CAB89402.1"/>
    <property type="molecule type" value="Genomic_DNA"/>
</dbReference>
<dbReference type="EMBL" id="CP002688">
    <property type="protein sequence ID" value="AED91537.1"/>
    <property type="molecule type" value="Genomic_DNA"/>
</dbReference>
<dbReference type="EMBL" id="BT001986">
    <property type="protein sequence ID" value="AAN71997.1"/>
    <property type="molecule type" value="mRNA"/>
</dbReference>
<dbReference type="PIR" id="T49998">
    <property type="entry name" value="T49998"/>
</dbReference>
<dbReference type="RefSeq" id="NP_196603.1">
    <property type="nucleotide sequence ID" value="NM_121079.3"/>
</dbReference>
<dbReference type="SMR" id="Q8H0W9"/>
<dbReference type="STRING" id="3702.Q8H0W9"/>
<dbReference type="iPTMnet" id="Q8H0W9"/>
<dbReference type="PaxDb" id="3702-AT5G10410.1"/>
<dbReference type="ProteomicsDB" id="240592"/>
<dbReference type="EnsemblPlants" id="AT5G10410.1">
    <property type="protein sequence ID" value="AT5G10410.1"/>
    <property type="gene ID" value="AT5G10410"/>
</dbReference>
<dbReference type="GeneID" id="830905"/>
<dbReference type="Gramene" id="AT5G10410.1">
    <property type="protein sequence ID" value="AT5G10410.1"/>
    <property type="gene ID" value="AT5G10410"/>
</dbReference>
<dbReference type="KEGG" id="ath:AT5G10410"/>
<dbReference type="Araport" id="AT5G10410"/>
<dbReference type="TAIR" id="AT5G10410">
    <property type="gene designation" value="PICALM10B"/>
</dbReference>
<dbReference type="eggNOG" id="KOG0251">
    <property type="taxonomic scope" value="Eukaryota"/>
</dbReference>
<dbReference type="HOGENOM" id="CLU_073451_0_0_1"/>
<dbReference type="InParanoid" id="Q8H0W9"/>
<dbReference type="OMA" id="FFEHICT"/>
<dbReference type="PhylomeDB" id="Q8H0W9"/>
<dbReference type="PRO" id="PR:Q8H0W9"/>
<dbReference type="Proteomes" id="UP000006548">
    <property type="component" value="Chromosome 5"/>
</dbReference>
<dbReference type="ExpressionAtlas" id="Q8H0W9">
    <property type="expression patterns" value="baseline and differential"/>
</dbReference>
<dbReference type="GO" id="GO:0005905">
    <property type="term" value="C:clathrin-coated pit"/>
    <property type="evidence" value="ECO:0007669"/>
    <property type="project" value="UniProtKB-SubCell"/>
</dbReference>
<dbReference type="GO" id="GO:0030136">
    <property type="term" value="C:clathrin-coated vesicle"/>
    <property type="evidence" value="ECO:0007669"/>
    <property type="project" value="UniProtKB-SubCell"/>
</dbReference>
<dbReference type="GO" id="GO:0005794">
    <property type="term" value="C:Golgi apparatus"/>
    <property type="evidence" value="ECO:0007669"/>
    <property type="project" value="UniProtKB-SubCell"/>
</dbReference>
<dbReference type="GO" id="GO:0005543">
    <property type="term" value="F:phospholipid binding"/>
    <property type="evidence" value="ECO:0007669"/>
    <property type="project" value="InterPro"/>
</dbReference>
<dbReference type="GO" id="GO:0048268">
    <property type="term" value="P:clathrin coat assembly"/>
    <property type="evidence" value="ECO:0007669"/>
    <property type="project" value="InterPro"/>
</dbReference>
<dbReference type="GO" id="GO:0072583">
    <property type="term" value="P:clathrin-dependent endocytosis"/>
    <property type="evidence" value="ECO:0007669"/>
    <property type="project" value="InterPro"/>
</dbReference>
<dbReference type="CDD" id="cd16987">
    <property type="entry name" value="ANTH_N_AP180_plant"/>
    <property type="match status" value="1"/>
</dbReference>
<dbReference type="FunFam" id="1.25.40.90:FF:000035">
    <property type="entry name" value="Putative clathrin assembly protein At4g40080"/>
    <property type="match status" value="1"/>
</dbReference>
<dbReference type="Gene3D" id="1.25.40.90">
    <property type="match status" value="1"/>
</dbReference>
<dbReference type="InterPro" id="IPR011417">
    <property type="entry name" value="ANTH_dom"/>
</dbReference>
<dbReference type="InterPro" id="IPR048050">
    <property type="entry name" value="ANTH_N_plant"/>
</dbReference>
<dbReference type="InterPro" id="IPR045192">
    <property type="entry name" value="AP180-like"/>
</dbReference>
<dbReference type="InterPro" id="IPR013809">
    <property type="entry name" value="ENTH"/>
</dbReference>
<dbReference type="InterPro" id="IPR008942">
    <property type="entry name" value="ENTH_VHS"/>
</dbReference>
<dbReference type="PANTHER" id="PTHR22951">
    <property type="entry name" value="CLATHRIN ASSEMBLY PROTEIN"/>
    <property type="match status" value="1"/>
</dbReference>
<dbReference type="PANTHER" id="PTHR22951:SF72">
    <property type="entry name" value="ENTH DOMAIN-CONTAINING PROTEIN"/>
    <property type="match status" value="1"/>
</dbReference>
<dbReference type="Pfam" id="PF07651">
    <property type="entry name" value="ANTH"/>
    <property type="match status" value="1"/>
</dbReference>
<dbReference type="SMART" id="SM00273">
    <property type="entry name" value="ENTH"/>
    <property type="match status" value="1"/>
</dbReference>
<dbReference type="SUPFAM" id="SSF48464">
    <property type="entry name" value="ENTH/VHS domain"/>
    <property type="match status" value="1"/>
</dbReference>
<dbReference type="PROSITE" id="PS50942">
    <property type="entry name" value="ENTH"/>
    <property type="match status" value="1"/>
</dbReference>
<accession>Q8H0W9</accession>
<accession>Q9LX94</accession>
<evidence type="ECO:0000250" key="1"/>
<evidence type="ECO:0000255" key="2">
    <source>
        <dbReference type="PROSITE-ProRule" id="PRU00243"/>
    </source>
</evidence>
<evidence type="ECO:0000305" key="3"/>
<reference key="1">
    <citation type="journal article" date="2000" name="Nature">
        <title>Sequence and analysis of chromosome 5 of the plant Arabidopsis thaliana.</title>
        <authorList>
            <person name="Tabata S."/>
            <person name="Kaneko T."/>
            <person name="Nakamura Y."/>
            <person name="Kotani H."/>
            <person name="Kato T."/>
            <person name="Asamizu E."/>
            <person name="Miyajima N."/>
            <person name="Sasamoto S."/>
            <person name="Kimura T."/>
            <person name="Hosouchi T."/>
            <person name="Kawashima K."/>
            <person name="Kohara M."/>
            <person name="Matsumoto M."/>
            <person name="Matsuno A."/>
            <person name="Muraki A."/>
            <person name="Nakayama S."/>
            <person name="Nakazaki N."/>
            <person name="Naruo K."/>
            <person name="Okumura S."/>
            <person name="Shinpo S."/>
            <person name="Takeuchi C."/>
            <person name="Wada T."/>
            <person name="Watanabe A."/>
            <person name="Yamada M."/>
            <person name="Yasuda M."/>
            <person name="Sato S."/>
            <person name="de la Bastide M."/>
            <person name="Huang E."/>
            <person name="Spiegel L."/>
            <person name="Gnoj L."/>
            <person name="O'Shaughnessy A."/>
            <person name="Preston R."/>
            <person name="Habermann K."/>
            <person name="Murray J."/>
            <person name="Johnson D."/>
            <person name="Rohlfing T."/>
            <person name="Nelson J."/>
            <person name="Stoneking T."/>
            <person name="Pepin K."/>
            <person name="Spieth J."/>
            <person name="Sekhon M."/>
            <person name="Armstrong J."/>
            <person name="Becker M."/>
            <person name="Belter E."/>
            <person name="Cordum H."/>
            <person name="Cordes M."/>
            <person name="Courtney L."/>
            <person name="Courtney W."/>
            <person name="Dante M."/>
            <person name="Du H."/>
            <person name="Edwards J."/>
            <person name="Fryman J."/>
            <person name="Haakensen B."/>
            <person name="Lamar E."/>
            <person name="Latreille P."/>
            <person name="Leonard S."/>
            <person name="Meyer R."/>
            <person name="Mulvaney E."/>
            <person name="Ozersky P."/>
            <person name="Riley A."/>
            <person name="Strowmatt C."/>
            <person name="Wagner-McPherson C."/>
            <person name="Wollam A."/>
            <person name="Yoakum M."/>
            <person name="Bell M."/>
            <person name="Dedhia N."/>
            <person name="Parnell L."/>
            <person name="Shah R."/>
            <person name="Rodriguez M."/>
            <person name="Hoon See L."/>
            <person name="Vil D."/>
            <person name="Baker J."/>
            <person name="Kirchoff K."/>
            <person name="Toth K."/>
            <person name="King L."/>
            <person name="Bahret A."/>
            <person name="Miller B."/>
            <person name="Marra M.A."/>
            <person name="Martienssen R."/>
            <person name="McCombie W.R."/>
            <person name="Wilson R.K."/>
            <person name="Murphy G."/>
            <person name="Bancroft I."/>
            <person name="Volckaert G."/>
            <person name="Wambutt R."/>
            <person name="Duesterhoeft A."/>
            <person name="Stiekema W."/>
            <person name="Pohl T."/>
            <person name="Entian K.-D."/>
            <person name="Terryn N."/>
            <person name="Hartley N."/>
            <person name="Bent E."/>
            <person name="Johnson S."/>
            <person name="Langham S.-A."/>
            <person name="McCullagh B."/>
            <person name="Robben J."/>
            <person name="Grymonprez B."/>
            <person name="Zimmermann W."/>
            <person name="Ramsperger U."/>
            <person name="Wedler H."/>
            <person name="Balke K."/>
            <person name="Wedler E."/>
            <person name="Peters S."/>
            <person name="van Staveren M."/>
            <person name="Dirkse W."/>
            <person name="Mooijman P."/>
            <person name="Klein Lankhorst R."/>
            <person name="Weitzenegger T."/>
            <person name="Bothe G."/>
            <person name="Rose M."/>
            <person name="Hauf J."/>
            <person name="Berneiser S."/>
            <person name="Hempel S."/>
            <person name="Feldpausch M."/>
            <person name="Lamberth S."/>
            <person name="Villarroel R."/>
            <person name="Gielen J."/>
            <person name="Ardiles W."/>
            <person name="Bents O."/>
            <person name="Lemcke K."/>
            <person name="Kolesov G."/>
            <person name="Mayer K.F.X."/>
            <person name="Rudd S."/>
            <person name="Schoof H."/>
            <person name="Schueller C."/>
            <person name="Zaccaria P."/>
            <person name="Mewes H.-W."/>
            <person name="Bevan M."/>
            <person name="Fransz P.F."/>
        </authorList>
    </citation>
    <scope>NUCLEOTIDE SEQUENCE [LARGE SCALE GENOMIC DNA]</scope>
    <source>
        <strain>cv. Columbia</strain>
    </source>
</reference>
<reference key="2">
    <citation type="journal article" date="2017" name="Plant J.">
        <title>Araport11: a complete reannotation of the Arabidopsis thaliana reference genome.</title>
        <authorList>
            <person name="Cheng C.Y."/>
            <person name="Krishnakumar V."/>
            <person name="Chan A.P."/>
            <person name="Thibaud-Nissen F."/>
            <person name="Schobel S."/>
            <person name="Town C.D."/>
        </authorList>
    </citation>
    <scope>GENOME REANNOTATION</scope>
    <source>
        <strain>cv. Columbia</strain>
    </source>
</reference>
<reference key="3">
    <citation type="journal article" date="2003" name="Science">
        <title>Empirical analysis of transcriptional activity in the Arabidopsis genome.</title>
        <authorList>
            <person name="Yamada K."/>
            <person name="Lim J."/>
            <person name="Dale J.M."/>
            <person name="Chen H."/>
            <person name="Shinn P."/>
            <person name="Palm C.J."/>
            <person name="Southwick A.M."/>
            <person name="Wu H.C."/>
            <person name="Kim C.J."/>
            <person name="Nguyen M."/>
            <person name="Pham P.K."/>
            <person name="Cheuk R.F."/>
            <person name="Karlin-Newmann G."/>
            <person name="Liu S.X."/>
            <person name="Lam B."/>
            <person name="Sakano H."/>
            <person name="Wu T."/>
            <person name="Yu G."/>
            <person name="Miranda M."/>
            <person name="Quach H.L."/>
            <person name="Tripp M."/>
            <person name="Chang C.H."/>
            <person name="Lee J.M."/>
            <person name="Toriumi M.J."/>
            <person name="Chan M.M."/>
            <person name="Tang C.C."/>
            <person name="Onodera C.S."/>
            <person name="Deng J.M."/>
            <person name="Akiyama K."/>
            <person name="Ansari Y."/>
            <person name="Arakawa T."/>
            <person name="Banh J."/>
            <person name="Banno F."/>
            <person name="Bowser L."/>
            <person name="Brooks S.Y."/>
            <person name="Carninci P."/>
            <person name="Chao Q."/>
            <person name="Choy N."/>
            <person name="Enju A."/>
            <person name="Goldsmith A.D."/>
            <person name="Gurjal M."/>
            <person name="Hansen N.F."/>
            <person name="Hayashizaki Y."/>
            <person name="Johnson-Hopson C."/>
            <person name="Hsuan V.W."/>
            <person name="Iida K."/>
            <person name="Karnes M."/>
            <person name="Khan S."/>
            <person name="Koesema E."/>
            <person name="Ishida J."/>
            <person name="Jiang P.X."/>
            <person name="Jones T."/>
            <person name="Kawai J."/>
            <person name="Kamiya A."/>
            <person name="Meyers C."/>
            <person name="Nakajima M."/>
            <person name="Narusaka M."/>
            <person name="Seki M."/>
            <person name="Sakurai T."/>
            <person name="Satou M."/>
            <person name="Tamse R."/>
            <person name="Vaysberg M."/>
            <person name="Wallender E.K."/>
            <person name="Wong C."/>
            <person name="Yamamura Y."/>
            <person name="Yuan S."/>
            <person name="Shinozaki K."/>
            <person name="Davis R.W."/>
            <person name="Theologis A."/>
            <person name="Ecker J.R."/>
        </authorList>
    </citation>
    <scope>NUCLEOTIDE SEQUENCE [LARGE SCALE MRNA]</scope>
    <source>
        <strain>cv. Columbia</strain>
    </source>
</reference>
<protein>
    <recommendedName>
        <fullName>Putative clathrin assembly protein At5g10410</fullName>
    </recommendedName>
</protein>
<proteinExistence type="evidence at transcript level"/>
<sequence length="338" mass="38742">MPGLKTHIIGKFKDKASIGKARLVHSFGSTAVKYIHLALLKSTTRTPNKPPNSDYVSAVISYSNSRYAPAAFSAALWRLRVTKNAIVATKSLIVIHKLIKSSRDKFEGLGHGRNNLKLNEFSDKSSNLTLELSQWIRWYGQYLDRLSWVPKVLGSFPNLLVNPKDKVEEKDRVSSYQTGYIIRQTDSLVSFFEHICTRPEIPPMFQNKIVDEIRELVIEDYFKIVRLVMVRLQVLFERLIKPGVKPIGDLGLNDFSLLLVRLVECKESLSGLFWRCRRLADDFWCLVEMLKAETEKKNNKQMIELAGLVQTTVKDDEEMIELVGSVQPEWVTFDDSDF</sequence>
<feature type="chain" id="PRO_0000187083" description="Putative clathrin assembly protein At5g10410">
    <location>
        <begin position="1"/>
        <end position="338"/>
    </location>
</feature>
<feature type="domain" description="ENTH" evidence="2">
    <location>
        <begin position="27"/>
        <end position="157"/>
    </location>
</feature>
<feature type="sequence conflict" description="In Ref. 3; AAN71997." evidence="3" ref="3">
    <original>D</original>
    <variation>E</variation>
    <location>
        <position position="165"/>
    </location>
</feature>
<gene>
    <name type="ordered locus">At5g10410</name>
    <name type="ORF">F12B17_240</name>
</gene>
<comment type="subcellular location">
    <subcellularLocation>
        <location evidence="1">Membrane</location>
        <location evidence="1">Clathrin-coated pit</location>
    </subcellularLocation>
    <subcellularLocation>
        <location evidence="1">Golgi apparatus</location>
    </subcellularLocation>
    <subcellularLocation>
        <location evidence="1">Cytoplasmic vesicle</location>
        <location evidence="1">Clathrin-coated vesicle</location>
    </subcellularLocation>
    <text evidence="1">Colocalized with clathrin in the Golgi area.</text>
</comment>